<evidence type="ECO:0000255" key="1">
    <source>
        <dbReference type="HAMAP-Rule" id="MF_00457"/>
    </source>
</evidence>
<name>Y2129_CUPNH</name>
<organism>
    <name type="scientific">Cupriavidus necator (strain ATCC 17699 / DSM 428 / KCTC 22496 / NCIMB 10442 / H16 / Stanier 337)</name>
    <name type="common">Ralstonia eutropha</name>
    <dbReference type="NCBI Taxonomy" id="381666"/>
    <lineage>
        <taxon>Bacteria</taxon>
        <taxon>Pseudomonadati</taxon>
        <taxon>Pseudomonadota</taxon>
        <taxon>Betaproteobacteria</taxon>
        <taxon>Burkholderiales</taxon>
        <taxon>Burkholderiaceae</taxon>
        <taxon>Cupriavidus</taxon>
    </lineage>
</organism>
<keyword id="KW-0378">Hydrolase</keyword>
<keyword id="KW-1185">Reference proteome</keyword>
<reference key="1">
    <citation type="journal article" date="2006" name="Nat. Biotechnol.">
        <title>Genome sequence of the bioplastic-producing 'Knallgas' bacterium Ralstonia eutropha H16.</title>
        <authorList>
            <person name="Pohlmann A."/>
            <person name="Fricke W.F."/>
            <person name="Reinecke F."/>
            <person name="Kusian B."/>
            <person name="Liesegang H."/>
            <person name="Cramm R."/>
            <person name="Eitinger T."/>
            <person name="Ewering C."/>
            <person name="Poetter M."/>
            <person name="Schwartz E."/>
            <person name="Strittmatter A."/>
            <person name="Voss I."/>
            <person name="Gottschalk G."/>
            <person name="Steinbuechel A."/>
            <person name="Friedrich B."/>
            <person name="Bowien B."/>
        </authorList>
    </citation>
    <scope>NUCLEOTIDE SEQUENCE [LARGE SCALE GENOMIC DNA]</scope>
    <source>
        <strain>ATCC 17699 / DSM 428 / KCTC 22496 / NCIMB 10442 / H16 / Stanier 337</strain>
    </source>
</reference>
<sequence>MTRLRAVLLATVIALLGACAAPTPPAEARRPMPAGQPTAGKAEVLWLGQAATRITTPGGKVIVVDPWLTTNPKTPPGFKQLSALGKVDLILVTHAHSDHLGDAPALARLTNAPIYNGGGLGQALVSLGMVPAAQAQRFGKSGTVMPFGPTGPRITAVHAEHSSELALKNPATGKDETHYGGEPVGYIIELENGFKIWHMGDTGLFGDMRLIGEVYKPDLVLIPIGGHFTMGPQEAAIAVRDLIRPRFAIPIHYQTSPQLSGTPEAFKAALGAGAAAGVIVPQPGEKVDF</sequence>
<dbReference type="EMBL" id="AM260479">
    <property type="protein sequence ID" value="CAJ93226.1"/>
    <property type="molecule type" value="Genomic_DNA"/>
</dbReference>
<dbReference type="RefSeq" id="WP_010810615.1">
    <property type="nucleotide sequence ID" value="NZ_CP039287.1"/>
</dbReference>
<dbReference type="SMR" id="Q0K9U5"/>
<dbReference type="KEGG" id="reh:H16_A2129"/>
<dbReference type="eggNOG" id="COG2220">
    <property type="taxonomic scope" value="Bacteria"/>
</dbReference>
<dbReference type="HOGENOM" id="CLU_070010_4_0_4"/>
<dbReference type="OrthoDB" id="9805728at2"/>
<dbReference type="Proteomes" id="UP000008210">
    <property type="component" value="Chromosome 1"/>
</dbReference>
<dbReference type="GO" id="GO:0016787">
    <property type="term" value="F:hydrolase activity"/>
    <property type="evidence" value="ECO:0007669"/>
    <property type="project" value="UniProtKB-UniRule"/>
</dbReference>
<dbReference type="Gene3D" id="3.60.15.10">
    <property type="entry name" value="Ribonuclease Z/Hydroxyacylglutathione hydrolase-like"/>
    <property type="match status" value="1"/>
</dbReference>
<dbReference type="HAMAP" id="MF_00457">
    <property type="entry name" value="UPF0173"/>
    <property type="match status" value="1"/>
</dbReference>
<dbReference type="InterPro" id="IPR001279">
    <property type="entry name" value="Metallo-B-lactamas"/>
</dbReference>
<dbReference type="InterPro" id="IPR036866">
    <property type="entry name" value="RibonucZ/Hydroxyglut_hydro"/>
</dbReference>
<dbReference type="InterPro" id="IPR022877">
    <property type="entry name" value="UPF0173"/>
</dbReference>
<dbReference type="InterPro" id="IPR050114">
    <property type="entry name" value="UPF0173_UPF0282_UlaG_hydrolase"/>
</dbReference>
<dbReference type="NCBIfam" id="NF001911">
    <property type="entry name" value="PRK00685.1"/>
    <property type="match status" value="1"/>
</dbReference>
<dbReference type="PANTHER" id="PTHR43546:SF3">
    <property type="entry name" value="UPF0173 METAL-DEPENDENT HYDROLASE MJ1163"/>
    <property type="match status" value="1"/>
</dbReference>
<dbReference type="PANTHER" id="PTHR43546">
    <property type="entry name" value="UPF0173 METAL-DEPENDENT HYDROLASE MJ1163-RELATED"/>
    <property type="match status" value="1"/>
</dbReference>
<dbReference type="Pfam" id="PF12706">
    <property type="entry name" value="Lactamase_B_2"/>
    <property type="match status" value="1"/>
</dbReference>
<dbReference type="SMART" id="SM00849">
    <property type="entry name" value="Lactamase_B"/>
    <property type="match status" value="1"/>
</dbReference>
<dbReference type="SUPFAM" id="SSF56281">
    <property type="entry name" value="Metallo-hydrolase/oxidoreductase"/>
    <property type="match status" value="1"/>
</dbReference>
<feature type="chain" id="PRO_0000367200" description="UPF0173 metal-dependent hydrolase H16_A2129">
    <location>
        <begin position="1"/>
        <end position="289"/>
    </location>
</feature>
<accession>Q0K9U5</accession>
<comment type="similarity">
    <text evidence="1">Belongs to the UPF0173 family.</text>
</comment>
<protein>
    <recommendedName>
        <fullName evidence="1">UPF0173 metal-dependent hydrolase H16_A2129</fullName>
    </recommendedName>
</protein>
<proteinExistence type="inferred from homology"/>
<gene>
    <name type="ordered locus">H16_A2129</name>
</gene>